<name>FBPC_MANSM</name>
<comment type="function">
    <text evidence="1">Part of the ABC transporter complex FbpABC involved in Fe(3+) ions import. Responsible for energy coupling to the transport system.</text>
</comment>
<comment type="catalytic activity">
    <reaction evidence="1">
        <text>Fe(3+)(out) + ATP + H2O = Fe(3+)(in) + ADP + phosphate + H(+)</text>
        <dbReference type="Rhea" id="RHEA:12332"/>
        <dbReference type="ChEBI" id="CHEBI:15377"/>
        <dbReference type="ChEBI" id="CHEBI:15378"/>
        <dbReference type="ChEBI" id="CHEBI:29034"/>
        <dbReference type="ChEBI" id="CHEBI:30616"/>
        <dbReference type="ChEBI" id="CHEBI:43474"/>
        <dbReference type="ChEBI" id="CHEBI:456216"/>
        <dbReference type="EC" id="7.2.2.7"/>
    </reaction>
</comment>
<comment type="subunit">
    <text evidence="1">The complex is composed of two ATP-binding proteins (FbpC), two transmembrane proteins (FbpB) and a solute-binding protein (FbpA).</text>
</comment>
<comment type="subcellular location">
    <subcellularLocation>
        <location evidence="1">Cell inner membrane</location>
        <topology evidence="1">Peripheral membrane protein</topology>
    </subcellularLocation>
</comment>
<comment type="similarity">
    <text evidence="1">Belongs to the ABC transporter superfamily. Fe(3+) ion importer (TC 3.A.1.10) family.</text>
</comment>
<comment type="sequence caution" evidence="2">
    <conflict type="erroneous initiation">
        <sequence resource="EMBL-CDS" id="AAU38194"/>
    </conflict>
</comment>
<sequence length="351" mass="39130">MTNQNDNFLVLKNINKTFGKSVVIDDLDLVIKRGTMVTLLGPSGCGKTTILRLVAGLENPTSGQIFIDGEDVTKSSIQNRDICIVFQSYALFPHMSIGDNVGYGLRMQNIAKEERKQRIREALELVDLAGFEDRFVDQISGGQQQRVALARALVLKPKVLLFDEPLSNLDANLRRSMREKIRELQQSLSITSLYVTHDQTEAFAVSDEVIVMNKGKIVQKAPAKELYQQPNSLFLANFMGESSIFNGQLQGNQVTLNGYQFTLPNAQQFNLPNGDCLVGIRPEAVTLKETGEPSQQCSIKTAVYMGNHWEIVADWAGQDLLINANPEVFNPEQKQAYVHLSSHGVFLLKKE</sequence>
<reference key="1">
    <citation type="journal article" date="2004" name="Nat. Biotechnol.">
        <title>The genome sequence of the capnophilic rumen bacterium Mannheimia succiniciproducens.</title>
        <authorList>
            <person name="Hong S.H."/>
            <person name="Kim J.S."/>
            <person name="Lee S.Y."/>
            <person name="In Y.H."/>
            <person name="Choi S.S."/>
            <person name="Rih J.-K."/>
            <person name="Kim C.H."/>
            <person name="Jeong H."/>
            <person name="Hur C.G."/>
            <person name="Kim J.J."/>
        </authorList>
    </citation>
    <scope>NUCLEOTIDE SEQUENCE [LARGE SCALE GENOMIC DNA]</scope>
    <source>
        <strain>KCTC 0769BP / MBEL55E</strain>
    </source>
</reference>
<keyword id="KW-0067">ATP-binding</keyword>
<keyword id="KW-0997">Cell inner membrane</keyword>
<keyword id="KW-1003">Cell membrane</keyword>
<keyword id="KW-0406">Ion transport</keyword>
<keyword id="KW-0408">Iron</keyword>
<keyword id="KW-0410">Iron transport</keyword>
<keyword id="KW-0472">Membrane</keyword>
<keyword id="KW-0547">Nucleotide-binding</keyword>
<keyword id="KW-1278">Translocase</keyword>
<keyword id="KW-0813">Transport</keyword>
<protein>
    <recommendedName>
        <fullName evidence="1">Fe(3+) ions import ATP-binding protein FbpC</fullName>
        <ecNumber evidence="1">7.2.2.7</ecNumber>
    </recommendedName>
</protein>
<dbReference type="EC" id="7.2.2.7" evidence="1"/>
<dbReference type="EMBL" id="AE016827">
    <property type="protein sequence ID" value="AAU38194.1"/>
    <property type="status" value="ALT_INIT"/>
    <property type="molecule type" value="Genomic_DNA"/>
</dbReference>
<dbReference type="RefSeq" id="WP_011200758.1">
    <property type="nucleotide sequence ID" value="NC_006300.1"/>
</dbReference>
<dbReference type="SMR" id="Q65S66"/>
<dbReference type="STRING" id="221988.MS1587"/>
<dbReference type="KEGG" id="msu:MS1587"/>
<dbReference type="eggNOG" id="COG3842">
    <property type="taxonomic scope" value="Bacteria"/>
</dbReference>
<dbReference type="HOGENOM" id="CLU_000604_1_1_6"/>
<dbReference type="OrthoDB" id="9802264at2"/>
<dbReference type="Proteomes" id="UP000000607">
    <property type="component" value="Chromosome"/>
</dbReference>
<dbReference type="GO" id="GO:0043190">
    <property type="term" value="C:ATP-binding cassette (ABC) transporter complex"/>
    <property type="evidence" value="ECO:0007669"/>
    <property type="project" value="InterPro"/>
</dbReference>
<dbReference type="GO" id="GO:0015408">
    <property type="term" value="F:ABC-type ferric iron transporter activity"/>
    <property type="evidence" value="ECO:0007669"/>
    <property type="project" value="UniProtKB-EC"/>
</dbReference>
<dbReference type="GO" id="GO:0005524">
    <property type="term" value="F:ATP binding"/>
    <property type="evidence" value="ECO:0007669"/>
    <property type="project" value="UniProtKB-KW"/>
</dbReference>
<dbReference type="GO" id="GO:0016887">
    <property type="term" value="F:ATP hydrolysis activity"/>
    <property type="evidence" value="ECO:0007669"/>
    <property type="project" value="InterPro"/>
</dbReference>
<dbReference type="CDD" id="cd03259">
    <property type="entry name" value="ABC_Carb_Solutes_like"/>
    <property type="match status" value="1"/>
</dbReference>
<dbReference type="FunFam" id="3.40.50.300:FF:002767">
    <property type="entry name" value="Fe(3+) ions import ATP-binding protein FbpC"/>
    <property type="match status" value="1"/>
</dbReference>
<dbReference type="Gene3D" id="2.40.50.100">
    <property type="match status" value="1"/>
</dbReference>
<dbReference type="Gene3D" id="3.40.50.300">
    <property type="entry name" value="P-loop containing nucleotide triphosphate hydrolases"/>
    <property type="match status" value="1"/>
</dbReference>
<dbReference type="InterPro" id="IPR003593">
    <property type="entry name" value="AAA+_ATPase"/>
</dbReference>
<dbReference type="InterPro" id="IPR050093">
    <property type="entry name" value="ABC_SmlMolc_Importer"/>
</dbReference>
<dbReference type="InterPro" id="IPR003439">
    <property type="entry name" value="ABC_transporter-like_ATP-bd"/>
</dbReference>
<dbReference type="InterPro" id="IPR017871">
    <property type="entry name" value="ABC_transporter-like_CS"/>
</dbReference>
<dbReference type="InterPro" id="IPR015853">
    <property type="entry name" value="ABC_transpr_FbpC"/>
</dbReference>
<dbReference type="InterPro" id="IPR008995">
    <property type="entry name" value="Mo/tungstate-bd_C_term_dom"/>
</dbReference>
<dbReference type="InterPro" id="IPR027417">
    <property type="entry name" value="P-loop_NTPase"/>
</dbReference>
<dbReference type="InterPro" id="IPR013611">
    <property type="entry name" value="Transp-assoc_OB_typ2"/>
</dbReference>
<dbReference type="NCBIfam" id="NF008513">
    <property type="entry name" value="PRK11432.1"/>
    <property type="match status" value="1"/>
</dbReference>
<dbReference type="PANTHER" id="PTHR42781">
    <property type="entry name" value="SPERMIDINE/PUTRESCINE IMPORT ATP-BINDING PROTEIN POTA"/>
    <property type="match status" value="1"/>
</dbReference>
<dbReference type="PANTHER" id="PTHR42781:SF4">
    <property type="entry name" value="SPERMIDINE_PUTRESCINE IMPORT ATP-BINDING PROTEIN POTA"/>
    <property type="match status" value="1"/>
</dbReference>
<dbReference type="Pfam" id="PF00005">
    <property type="entry name" value="ABC_tran"/>
    <property type="match status" value="1"/>
</dbReference>
<dbReference type="Pfam" id="PF08402">
    <property type="entry name" value="TOBE_2"/>
    <property type="match status" value="1"/>
</dbReference>
<dbReference type="SMART" id="SM00382">
    <property type="entry name" value="AAA"/>
    <property type="match status" value="1"/>
</dbReference>
<dbReference type="SUPFAM" id="SSF50331">
    <property type="entry name" value="MOP-like"/>
    <property type="match status" value="1"/>
</dbReference>
<dbReference type="SUPFAM" id="SSF52540">
    <property type="entry name" value="P-loop containing nucleoside triphosphate hydrolases"/>
    <property type="match status" value="1"/>
</dbReference>
<dbReference type="PROSITE" id="PS00211">
    <property type="entry name" value="ABC_TRANSPORTER_1"/>
    <property type="match status" value="1"/>
</dbReference>
<dbReference type="PROSITE" id="PS50893">
    <property type="entry name" value="ABC_TRANSPORTER_2"/>
    <property type="match status" value="1"/>
</dbReference>
<dbReference type="PROSITE" id="PS51242">
    <property type="entry name" value="FBPC"/>
    <property type="match status" value="1"/>
</dbReference>
<organism>
    <name type="scientific">Mannheimia succiniciproducens (strain KCTC 0769BP / MBEL55E)</name>
    <dbReference type="NCBI Taxonomy" id="221988"/>
    <lineage>
        <taxon>Bacteria</taxon>
        <taxon>Pseudomonadati</taxon>
        <taxon>Pseudomonadota</taxon>
        <taxon>Gammaproteobacteria</taxon>
        <taxon>Pasteurellales</taxon>
        <taxon>Pasteurellaceae</taxon>
        <taxon>Basfia</taxon>
    </lineage>
</organism>
<evidence type="ECO:0000255" key="1">
    <source>
        <dbReference type="HAMAP-Rule" id="MF_01706"/>
    </source>
</evidence>
<evidence type="ECO:0000305" key="2"/>
<feature type="chain" id="PRO_0000092354" description="Fe(3+) ions import ATP-binding protein FbpC">
    <location>
        <begin position="1"/>
        <end position="351"/>
    </location>
</feature>
<feature type="domain" description="ABC transporter" evidence="1">
    <location>
        <begin position="9"/>
        <end position="239"/>
    </location>
</feature>
<feature type="binding site" evidence="1">
    <location>
        <begin position="41"/>
        <end position="48"/>
    </location>
    <ligand>
        <name>ATP</name>
        <dbReference type="ChEBI" id="CHEBI:30616"/>
    </ligand>
</feature>
<proteinExistence type="inferred from homology"/>
<accession>Q65S66</accession>
<gene>
    <name evidence="1" type="primary">fbpC</name>
    <name type="ordered locus">MS1587</name>
</gene>